<feature type="chain" id="PRO_0000244213" description="Large ribosomal subunit protein bL25">
    <location>
        <begin position="1"/>
        <end position="208"/>
    </location>
</feature>
<feature type="region of interest" description="Disordered" evidence="2">
    <location>
        <begin position="1"/>
        <end position="21"/>
    </location>
</feature>
<sequence>MSNEFSLNAEKRDVQGKGASRRLRRVDGKVPGIIYGGETAPVAISVSHNQLSHALQNEAFYSHILTLDVEGTNESVILKDLQRHPYKPIIMHADFLRVQKDQKLHVNVPLHFINEDKCEGVRQGGGSISHQQTEVEVICLPANLPEFIEVDMTSVQVEQILHLSDLKLPEGVELAELTKGSDHDLPVVAVHKPKGAKADEAEGEGEAE</sequence>
<gene>
    <name evidence="1" type="primary">rplY</name>
    <name evidence="1" type="synonym">ctc</name>
    <name type="ordered locus">HCH_01725</name>
</gene>
<organism>
    <name type="scientific">Hahella chejuensis (strain KCTC 2396)</name>
    <dbReference type="NCBI Taxonomy" id="349521"/>
    <lineage>
        <taxon>Bacteria</taxon>
        <taxon>Pseudomonadati</taxon>
        <taxon>Pseudomonadota</taxon>
        <taxon>Gammaproteobacteria</taxon>
        <taxon>Oceanospirillales</taxon>
        <taxon>Hahellaceae</taxon>
        <taxon>Hahella</taxon>
    </lineage>
</organism>
<dbReference type="EMBL" id="CP000155">
    <property type="protein sequence ID" value="ABC28572.1"/>
    <property type="molecule type" value="Genomic_DNA"/>
</dbReference>
<dbReference type="RefSeq" id="WP_011395644.1">
    <property type="nucleotide sequence ID" value="NC_007645.1"/>
</dbReference>
<dbReference type="SMR" id="Q2SLA2"/>
<dbReference type="STRING" id="349521.HCH_01725"/>
<dbReference type="KEGG" id="hch:HCH_01725"/>
<dbReference type="eggNOG" id="COG1825">
    <property type="taxonomic scope" value="Bacteria"/>
</dbReference>
<dbReference type="HOGENOM" id="CLU_075939_0_1_6"/>
<dbReference type="OrthoDB" id="9806411at2"/>
<dbReference type="Proteomes" id="UP000000238">
    <property type="component" value="Chromosome"/>
</dbReference>
<dbReference type="GO" id="GO:0022625">
    <property type="term" value="C:cytosolic large ribosomal subunit"/>
    <property type="evidence" value="ECO:0007669"/>
    <property type="project" value="TreeGrafter"/>
</dbReference>
<dbReference type="GO" id="GO:0008097">
    <property type="term" value="F:5S rRNA binding"/>
    <property type="evidence" value="ECO:0007669"/>
    <property type="project" value="InterPro"/>
</dbReference>
<dbReference type="GO" id="GO:0003735">
    <property type="term" value="F:structural constituent of ribosome"/>
    <property type="evidence" value="ECO:0007669"/>
    <property type="project" value="InterPro"/>
</dbReference>
<dbReference type="GO" id="GO:0006412">
    <property type="term" value="P:translation"/>
    <property type="evidence" value="ECO:0007669"/>
    <property type="project" value="UniProtKB-UniRule"/>
</dbReference>
<dbReference type="CDD" id="cd00495">
    <property type="entry name" value="Ribosomal_L25_TL5_CTC"/>
    <property type="match status" value="1"/>
</dbReference>
<dbReference type="FunFam" id="2.170.120.20:FF:000003">
    <property type="entry name" value="50S ribosomal protein L25"/>
    <property type="match status" value="1"/>
</dbReference>
<dbReference type="FunFam" id="2.40.240.10:FF:000002">
    <property type="entry name" value="50S ribosomal protein L25"/>
    <property type="match status" value="1"/>
</dbReference>
<dbReference type="Gene3D" id="2.170.120.20">
    <property type="entry name" value="Ribosomal protein L25, beta domain"/>
    <property type="match status" value="1"/>
</dbReference>
<dbReference type="Gene3D" id="2.40.240.10">
    <property type="entry name" value="Ribosomal Protein L25, Chain P"/>
    <property type="match status" value="1"/>
</dbReference>
<dbReference type="HAMAP" id="MF_01336">
    <property type="entry name" value="Ribosomal_bL25"/>
    <property type="match status" value="1"/>
</dbReference>
<dbReference type="HAMAP" id="MF_01334">
    <property type="entry name" value="Ribosomal_bL25_CTC"/>
    <property type="match status" value="1"/>
</dbReference>
<dbReference type="InterPro" id="IPR020056">
    <property type="entry name" value="Rbsml_bL25/Gln-tRNA_synth_N"/>
</dbReference>
<dbReference type="InterPro" id="IPR011035">
    <property type="entry name" value="Ribosomal_bL25/Gln-tRNA_synth"/>
</dbReference>
<dbReference type="InterPro" id="IPR020057">
    <property type="entry name" value="Ribosomal_bL25_b-dom"/>
</dbReference>
<dbReference type="InterPro" id="IPR037121">
    <property type="entry name" value="Ribosomal_bL25_C"/>
</dbReference>
<dbReference type="InterPro" id="IPR001021">
    <property type="entry name" value="Ribosomal_bL25_long"/>
</dbReference>
<dbReference type="InterPro" id="IPR020055">
    <property type="entry name" value="Ribosomal_bL25_short"/>
</dbReference>
<dbReference type="InterPro" id="IPR029751">
    <property type="entry name" value="Ribosomal_L25_dom"/>
</dbReference>
<dbReference type="InterPro" id="IPR020930">
    <property type="entry name" value="Ribosomal_uL5_bac-type"/>
</dbReference>
<dbReference type="NCBIfam" id="TIGR00731">
    <property type="entry name" value="bL25_bact_ctc"/>
    <property type="match status" value="1"/>
</dbReference>
<dbReference type="NCBIfam" id="NF004128">
    <property type="entry name" value="PRK05618.1-2"/>
    <property type="match status" value="1"/>
</dbReference>
<dbReference type="NCBIfam" id="NF004130">
    <property type="entry name" value="PRK05618.1-5"/>
    <property type="match status" value="1"/>
</dbReference>
<dbReference type="NCBIfam" id="NF004612">
    <property type="entry name" value="PRK05943.1"/>
    <property type="match status" value="1"/>
</dbReference>
<dbReference type="PANTHER" id="PTHR33284">
    <property type="entry name" value="RIBOSOMAL PROTEIN L25/GLN-TRNA SYNTHETASE, ANTI-CODON-BINDING DOMAIN-CONTAINING PROTEIN"/>
    <property type="match status" value="1"/>
</dbReference>
<dbReference type="PANTHER" id="PTHR33284:SF1">
    <property type="entry name" value="RIBOSOMAL PROTEIN L25_GLN-TRNA SYNTHETASE, ANTI-CODON-BINDING DOMAIN-CONTAINING PROTEIN"/>
    <property type="match status" value="1"/>
</dbReference>
<dbReference type="Pfam" id="PF01386">
    <property type="entry name" value="Ribosomal_L25p"/>
    <property type="match status" value="1"/>
</dbReference>
<dbReference type="Pfam" id="PF14693">
    <property type="entry name" value="Ribosomal_TL5_C"/>
    <property type="match status" value="1"/>
</dbReference>
<dbReference type="SUPFAM" id="SSF50715">
    <property type="entry name" value="Ribosomal protein L25-like"/>
    <property type="match status" value="1"/>
</dbReference>
<reference key="1">
    <citation type="journal article" date="2005" name="Nucleic Acids Res.">
        <title>Genomic blueprint of Hahella chejuensis, a marine microbe producing an algicidal agent.</title>
        <authorList>
            <person name="Jeong H."/>
            <person name="Yim J.H."/>
            <person name="Lee C."/>
            <person name="Choi S.-H."/>
            <person name="Park Y.K."/>
            <person name="Yoon S.H."/>
            <person name="Hur C.-G."/>
            <person name="Kang H.-Y."/>
            <person name="Kim D."/>
            <person name="Lee H.H."/>
            <person name="Park K.H."/>
            <person name="Park S.-H."/>
            <person name="Park H.-S."/>
            <person name="Lee H.K."/>
            <person name="Oh T.K."/>
            <person name="Kim J.F."/>
        </authorList>
    </citation>
    <scope>NUCLEOTIDE SEQUENCE [LARGE SCALE GENOMIC DNA]</scope>
    <source>
        <strain>KCTC 2396</strain>
    </source>
</reference>
<keyword id="KW-1185">Reference proteome</keyword>
<keyword id="KW-0687">Ribonucleoprotein</keyword>
<keyword id="KW-0689">Ribosomal protein</keyword>
<keyword id="KW-0694">RNA-binding</keyword>
<keyword id="KW-0699">rRNA-binding</keyword>
<accession>Q2SLA2</accession>
<name>RL25_HAHCH</name>
<protein>
    <recommendedName>
        <fullName evidence="1">Large ribosomal subunit protein bL25</fullName>
    </recommendedName>
    <alternativeName>
        <fullName evidence="3">50S ribosomal protein L25</fullName>
    </alternativeName>
    <alternativeName>
        <fullName evidence="1">General stress protein CTC</fullName>
    </alternativeName>
</protein>
<proteinExistence type="inferred from homology"/>
<comment type="function">
    <text evidence="1">This is one of the proteins that binds to the 5S RNA in the ribosome where it forms part of the central protuberance.</text>
</comment>
<comment type="subunit">
    <text evidence="1">Part of the 50S ribosomal subunit; part of the 5S rRNA/L5/L18/L25 subcomplex. Contacts the 5S rRNA. Binds to the 5S rRNA independently of L5 and L18.</text>
</comment>
<comment type="similarity">
    <text evidence="1">Belongs to the bacterial ribosomal protein bL25 family. CTC subfamily.</text>
</comment>
<evidence type="ECO:0000255" key="1">
    <source>
        <dbReference type="HAMAP-Rule" id="MF_01334"/>
    </source>
</evidence>
<evidence type="ECO:0000256" key="2">
    <source>
        <dbReference type="SAM" id="MobiDB-lite"/>
    </source>
</evidence>
<evidence type="ECO:0000305" key="3"/>